<reference key="1">
    <citation type="submission" date="2008-04" db="EMBL/GenBank/DDBJ databases">
        <title>Complete sequence of Yersinia pseudotuberculosis PB1/+.</title>
        <authorList>
            <person name="Copeland A."/>
            <person name="Lucas S."/>
            <person name="Lapidus A."/>
            <person name="Glavina del Rio T."/>
            <person name="Dalin E."/>
            <person name="Tice H."/>
            <person name="Bruce D."/>
            <person name="Goodwin L."/>
            <person name="Pitluck S."/>
            <person name="Munk A.C."/>
            <person name="Brettin T."/>
            <person name="Detter J.C."/>
            <person name="Han C."/>
            <person name="Tapia R."/>
            <person name="Schmutz J."/>
            <person name="Larimer F."/>
            <person name="Land M."/>
            <person name="Hauser L."/>
            <person name="Challacombe J.F."/>
            <person name="Green L."/>
            <person name="Lindler L.E."/>
            <person name="Nikolich M.P."/>
            <person name="Richardson P."/>
        </authorList>
    </citation>
    <scope>NUCLEOTIDE SEQUENCE [LARGE SCALE GENOMIC DNA]</scope>
    <source>
        <strain>PB1/+</strain>
    </source>
</reference>
<evidence type="ECO:0000255" key="1">
    <source>
        <dbReference type="HAMAP-Rule" id="MF_00038"/>
    </source>
</evidence>
<dbReference type="EC" id="2.7.8.13" evidence="1"/>
<dbReference type="EMBL" id="CP001048">
    <property type="protein sequence ID" value="ACC87696.1"/>
    <property type="molecule type" value="Genomic_DNA"/>
</dbReference>
<dbReference type="RefSeq" id="WP_002210437.1">
    <property type="nucleotide sequence ID" value="NZ_CP009780.1"/>
</dbReference>
<dbReference type="SMR" id="B2K4E3"/>
<dbReference type="GeneID" id="57974063"/>
<dbReference type="KEGG" id="ypb:YPTS_0712"/>
<dbReference type="PATRIC" id="fig|502801.10.peg.43"/>
<dbReference type="UniPathway" id="UPA00219"/>
<dbReference type="GO" id="GO:0005886">
    <property type="term" value="C:plasma membrane"/>
    <property type="evidence" value="ECO:0007669"/>
    <property type="project" value="UniProtKB-SubCell"/>
</dbReference>
<dbReference type="GO" id="GO:0046872">
    <property type="term" value="F:metal ion binding"/>
    <property type="evidence" value="ECO:0007669"/>
    <property type="project" value="UniProtKB-KW"/>
</dbReference>
<dbReference type="GO" id="GO:0008963">
    <property type="term" value="F:phospho-N-acetylmuramoyl-pentapeptide-transferase activity"/>
    <property type="evidence" value="ECO:0007669"/>
    <property type="project" value="UniProtKB-UniRule"/>
</dbReference>
<dbReference type="GO" id="GO:0051992">
    <property type="term" value="F:UDP-N-acetylmuramoyl-L-alanyl-D-glutamyl-meso-2,6-diaminopimelyl-D-alanyl-D-alanine:undecaprenyl-phosphate transferase activity"/>
    <property type="evidence" value="ECO:0007669"/>
    <property type="project" value="RHEA"/>
</dbReference>
<dbReference type="GO" id="GO:0051301">
    <property type="term" value="P:cell division"/>
    <property type="evidence" value="ECO:0007669"/>
    <property type="project" value="UniProtKB-KW"/>
</dbReference>
<dbReference type="GO" id="GO:0071555">
    <property type="term" value="P:cell wall organization"/>
    <property type="evidence" value="ECO:0007669"/>
    <property type="project" value="UniProtKB-KW"/>
</dbReference>
<dbReference type="GO" id="GO:0009252">
    <property type="term" value="P:peptidoglycan biosynthetic process"/>
    <property type="evidence" value="ECO:0007669"/>
    <property type="project" value="UniProtKB-UniRule"/>
</dbReference>
<dbReference type="GO" id="GO:0008360">
    <property type="term" value="P:regulation of cell shape"/>
    <property type="evidence" value="ECO:0007669"/>
    <property type="project" value="UniProtKB-KW"/>
</dbReference>
<dbReference type="CDD" id="cd06852">
    <property type="entry name" value="GT_MraY"/>
    <property type="match status" value="1"/>
</dbReference>
<dbReference type="HAMAP" id="MF_00038">
    <property type="entry name" value="MraY"/>
    <property type="match status" value="1"/>
</dbReference>
<dbReference type="InterPro" id="IPR000715">
    <property type="entry name" value="Glycosyl_transferase_4"/>
</dbReference>
<dbReference type="InterPro" id="IPR003524">
    <property type="entry name" value="PNAcMuramoyl-5peptid_Trfase"/>
</dbReference>
<dbReference type="InterPro" id="IPR018480">
    <property type="entry name" value="PNAcMuramoyl-5peptid_Trfase_CS"/>
</dbReference>
<dbReference type="NCBIfam" id="TIGR00445">
    <property type="entry name" value="mraY"/>
    <property type="match status" value="1"/>
</dbReference>
<dbReference type="PANTHER" id="PTHR22926">
    <property type="entry name" value="PHOSPHO-N-ACETYLMURAMOYL-PENTAPEPTIDE-TRANSFERASE"/>
    <property type="match status" value="1"/>
</dbReference>
<dbReference type="PANTHER" id="PTHR22926:SF5">
    <property type="entry name" value="PHOSPHO-N-ACETYLMURAMOYL-PENTAPEPTIDE-TRANSFERASE HOMOLOG"/>
    <property type="match status" value="1"/>
</dbReference>
<dbReference type="Pfam" id="PF00953">
    <property type="entry name" value="Glycos_transf_4"/>
    <property type="match status" value="1"/>
</dbReference>
<dbReference type="Pfam" id="PF10555">
    <property type="entry name" value="MraY_sig1"/>
    <property type="match status" value="1"/>
</dbReference>
<dbReference type="PROSITE" id="PS01347">
    <property type="entry name" value="MRAY_1"/>
    <property type="match status" value="1"/>
</dbReference>
<dbReference type="PROSITE" id="PS01348">
    <property type="entry name" value="MRAY_2"/>
    <property type="match status" value="1"/>
</dbReference>
<proteinExistence type="inferred from homology"/>
<comment type="function">
    <text evidence="1">Catalyzes the initial step of the lipid cycle reactions in the biosynthesis of the cell wall peptidoglycan: transfers peptidoglycan precursor phospho-MurNAc-pentapeptide from UDP-MurNAc-pentapeptide onto the lipid carrier undecaprenyl phosphate, yielding undecaprenyl-pyrophosphoryl-MurNAc-pentapeptide, known as lipid I.</text>
</comment>
<comment type="catalytic activity">
    <reaction evidence="1">
        <text>UDP-N-acetyl-alpha-D-muramoyl-L-alanyl-gamma-D-glutamyl-meso-2,6-diaminopimeloyl-D-alanyl-D-alanine + di-trans,octa-cis-undecaprenyl phosphate = di-trans,octa-cis-undecaprenyl diphospho-N-acetyl-alpha-D-muramoyl-L-alanyl-D-glutamyl-meso-2,6-diaminopimeloyl-D-alanyl-D-alanine + UMP</text>
        <dbReference type="Rhea" id="RHEA:28386"/>
        <dbReference type="ChEBI" id="CHEBI:57865"/>
        <dbReference type="ChEBI" id="CHEBI:60392"/>
        <dbReference type="ChEBI" id="CHEBI:61386"/>
        <dbReference type="ChEBI" id="CHEBI:61387"/>
        <dbReference type="EC" id="2.7.8.13"/>
    </reaction>
</comment>
<comment type="cofactor">
    <cofactor evidence="1">
        <name>Mg(2+)</name>
        <dbReference type="ChEBI" id="CHEBI:18420"/>
    </cofactor>
</comment>
<comment type="pathway">
    <text evidence="1">Cell wall biogenesis; peptidoglycan biosynthesis.</text>
</comment>
<comment type="subcellular location">
    <subcellularLocation>
        <location evidence="1">Cell inner membrane</location>
        <topology evidence="1">Multi-pass membrane protein</topology>
    </subcellularLocation>
</comment>
<comment type="similarity">
    <text evidence="1">Belongs to the glycosyltransferase 4 family. MraY subfamily.</text>
</comment>
<name>MRAY_YERPB</name>
<sequence>MLVWLAEYLVKFYSGFNVFSYLTFRAIVSLLTALFISLWMGPHLIAWLQKLQIGQVVRNDGPESHFSKRGTPTMGGLMILFSITISVLMWAYPSNPYVWCVLFILIGYGIVGFIDDYRKVVRKNTKGLIARWKYFWQSIIALAAAFTMYSIGKDTSATELVVPFFKDIMPQLGLLYVLLAYFVIVGTSNAVNLTDGLDGLAIMPTVFVAAGFALVAWATGNVNFAAYLHIPYLRHAGELVIVCTAIVGAGLGFLWFNTYPAQVFMGDVGSLALGGALGTIAVLLRQEFLLVIMGGVFVVETLSVILQVGSFKLRGQRIFRMAPIHHHYELKGWPEPRVIVRFWIISLMLVLIGLATLKVR</sequence>
<gene>
    <name evidence="1" type="primary">mraY</name>
    <name type="ordered locus">YPTS_0712</name>
</gene>
<organism>
    <name type="scientific">Yersinia pseudotuberculosis serotype IB (strain PB1/+)</name>
    <dbReference type="NCBI Taxonomy" id="502801"/>
    <lineage>
        <taxon>Bacteria</taxon>
        <taxon>Pseudomonadati</taxon>
        <taxon>Pseudomonadota</taxon>
        <taxon>Gammaproteobacteria</taxon>
        <taxon>Enterobacterales</taxon>
        <taxon>Yersiniaceae</taxon>
        <taxon>Yersinia</taxon>
    </lineage>
</organism>
<accession>B2K4E3</accession>
<feature type="chain" id="PRO_1000090692" description="Phospho-N-acetylmuramoyl-pentapeptide-transferase">
    <location>
        <begin position="1"/>
        <end position="360"/>
    </location>
</feature>
<feature type="transmembrane region" description="Helical" evidence="1">
    <location>
        <begin position="27"/>
        <end position="47"/>
    </location>
</feature>
<feature type="transmembrane region" description="Helical" evidence="1">
    <location>
        <begin position="72"/>
        <end position="92"/>
    </location>
</feature>
<feature type="transmembrane region" description="Helical" evidence="1">
    <location>
        <begin position="94"/>
        <end position="114"/>
    </location>
</feature>
<feature type="transmembrane region" description="Helical" evidence="1">
    <location>
        <begin position="132"/>
        <end position="152"/>
    </location>
</feature>
<feature type="transmembrane region" description="Helical" evidence="1">
    <location>
        <begin position="168"/>
        <end position="188"/>
    </location>
</feature>
<feature type="transmembrane region" description="Helical" evidence="1">
    <location>
        <begin position="199"/>
        <end position="219"/>
    </location>
</feature>
<feature type="transmembrane region" description="Helical" evidence="1">
    <location>
        <begin position="236"/>
        <end position="256"/>
    </location>
</feature>
<feature type="transmembrane region" description="Helical" evidence="1">
    <location>
        <begin position="263"/>
        <end position="283"/>
    </location>
</feature>
<feature type="transmembrane region" description="Helical" evidence="1">
    <location>
        <begin position="288"/>
        <end position="308"/>
    </location>
</feature>
<feature type="transmembrane region" description="Helical" evidence="1">
    <location>
        <begin position="338"/>
        <end position="358"/>
    </location>
</feature>
<protein>
    <recommendedName>
        <fullName evidence="1">Phospho-N-acetylmuramoyl-pentapeptide-transferase</fullName>
        <ecNumber evidence="1">2.7.8.13</ecNumber>
    </recommendedName>
    <alternativeName>
        <fullName evidence="1">UDP-MurNAc-pentapeptide phosphotransferase</fullName>
    </alternativeName>
</protein>
<keyword id="KW-0131">Cell cycle</keyword>
<keyword id="KW-0132">Cell division</keyword>
<keyword id="KW-0997">Cell inner membrane</keyword>
<keyword id="KW-1003">Cell membrane</keyword>
<keyword id="KW-0133">Cell shape</keyword>
<keyword id="KW-0961">Cell wall biogenesis/degradation</keyword>
<keyword id="KW-0460">Magnesium</keyword>
<keyword id="KW-0472">Membrane</keyword>
<keyword id="KW-0479">Metal-binding</keyword>
<keyword id="KW-0573">Peptidoglycan synthesis</keyword>
<keyword id="KW-0808">Transferase</keyword>
<keyword id="KW-0812">Transmembrane</keyword>
<keyword id="KW-1133">Transmembrane helix</keyword>